<sequence>GVPINVKCRGSPQCIQPCRDAGMRFGKCMNGKCHCTPQ</sequence>
<feature type="peptide" id="PRO_0000044900" description="Potassium channel toxin alpha-KTx 3.8" evidence="2">
    <location>
        <begin position="1"/>
        <end position="38"/>
    </location>
</feature>
<feature type="region of interest" description="Interaction with Ca(2+)-activated K(+) channels" evidence="1">
    <location>
        <begin position="26"/>
        <end position="33"/>
    </location>
</feature>
<feature type="disulfide bond" evidence="1">
    <location>
        <begin position="8"/>
        <end position="28"/>
    </location>
</feature>
<feature type="disulfide bond" evidence="1">
    <location>
        <begin position="14"/>
        <end position="33"/>
    </location>
</feature>
<feature type="disulfide bond" evidence="1">
    <location>
        <begin position="18"/>
        <end position="35"/>
    </location>
</feature>
<proteinExistence type="evidence at protein level"/>
<comment type="function">
    <text evidence="1">Potassium channel inhibitor.</text>
</comment>
<comment type="subcellular location">
    <subcellularLocation>
        <location evidence="2">Secreted</location>
    </subcellularLocation>
</comment>
<comment type="tissue specificity">
    <text evidence="5">Expressed by the venom gland.</text>
</comment>
<comment type="domain">
    <text evidence="4">Has the structural arrangement of an alpha-helix connected to antiparallel beta-sheets by disulfide bonds (CS-alpha/beta).</text>
</comment>
<comment type="mass spectrometry"/>
<comment type="similarity">
    <text evidence="4">Belongs to the short scorpion toxin superfamily. Potassium channel inhibitor family. Alpha-KTx 03 subfamily.</text>
</comment>
<evidence type="ECO:0000250" key="1"/>
<evidence type="ECO:0000269" key="2">
    <source>
    </source>
</evidence>
<evidence type="ECO:0000303" key="3">
    <source>
    </source>
</evidence>
<evidence type="ECO:0000305" key="4"/>
<evidence type="ECO:0000305" key="5">
    <source>
    </source>
</evidence>
<reference key="1">
    <citation type="journal article" date="1998" name="Comp. Biochem. Physiol.">
        <title>Purification and primary structure of low molecular mass peptides from scorpion (Buthus sindicus) venom.</title>
        <authorList>
            <person name="Ali S.A."/>
            <person name="Stoeva S."/>
            <person name="Schuetz J."/>
            <person name="Kayed R."/>
            <person name="Abbasi A."/>
            <person name="Zaidi Z.H."/>
            <person name="Voelter W."/>
        </authorList>
    </citation>
    <scope>PROTEIN SEQUENCE</scope>
    <scope>MASS SPECTROMETRY</scope>
    <scope>SUBCELLULAR LOCATION</scope>
    <source>
        <tissue>Venom</tissue>
    </source>
</reference>
<organism>
    <name type="scientific">Hottentotta tamulus sindicus</name>
    <name type="common">Scorpion</name>
    <name type="synonym">Buthus sindicus</name>
    <dbReference type="NCBI Taxonomy" id="42519"/>
    <lineage>
        <taxon>Eukaryota</taxon>
        <taxon>Metazoa</taxon>
        <taxon>Ecdysozoa</taxon>
        <taxon>Arthropoda</taxon>
        <taxon>Chelicerata</taxon>
        <taxon>Arachnida</taxon>
        <taxon>Scorpiones</taxon>
        <taxon>Buthida</taxon>
        <taxon>Buthoidea</taxon>
        <taxon>Buthidae</taxon>
        <taxon>Mesobuthus</taxon>
    </lineage>
</organism>
<accession>P59886</accession>
<keyword id="KW-0903">Direct protein sequencing</keyword>
<keyword id="KW-1015">Disulfide bond</keyword>
<keyword id="KW-0872">Ion channel impairing toxin</keyword>
<keyword id="KW-0528">Neurotoxin</keyword>
<keyword id="KW-0632">Potassium channel impairing toxin</keyword>
<keyword id="KW-0964">Secreted</keyword>
<keyword id="KW-0800">Toxin</keyword>
<name>KAX38_HOTTS</name>
<protein>
    <recommendedName>
        <fullName>Potassium channel toxin alpha-KTx 3.8</fullName>
    </recommendedName>
    <alternativeName>
        <fullName evidence="3">Charybdotoxin-like peptide Bs 6</fullName>
        <shortName evidence="3">Bs6</shortName>
    </alternativeName>
</protein>
<dbReference type="SMR" id="P59886"/>
<dbReference type="GO" id="GO:0005576">
    <property type="term" value="C:extracellular region"/>
    <property type="evidence" value="ECO:0007669"/>
    <property type="project" value="UniProtKB-SubCell"/>
</dbReference>
<dbReference type="GO" id="GO:0008200">
    <property type="term" value="F:ion channel inhibitor activity"/>
    <property type="evidence" value="ECO:0007669"/>
    <property type="project" value="InterPro"/>
</dbReference>
<dbReference type="GO" id="GO:0015459">
    <property type="term" value="F:potassium channel regulator activity"/>
    <property type="evidence" value="ECO:0007669"/>
    <property type="project" value="UniProtKB-KW"/>
</dbReference>
<dbReference type="GO" id="GO:0090729">
    <property type="term" value="F:toxin activity"/>
    <property type="evidence" value="ECO:0007669"/>
    <property type="project" value="UniProtKB-KW"/>
</dbReference>
<dbReference type="FunFam" id="3.30.30.10:FF:000009">
    <property type="entry name" value="Potassium channel toxin alpha-KTx 4.3"/>
    <property type="match status" value="1"/>
</dbReference>
<dbReference type="Gene3D" id="3.30.30.10">
    <property type="entry name" value="Knottin, scorpion toxin-like"/>
    <property type="match status" value="1"/>
</dbReference>
<dbReference type="InterPro" id="IPR036574">
    <property type="entry name" value="Scorpion_toxin-like_sf"/>
</dbReference>
<dbReference type="InterPro" id="IPR001947">
    <property type="entry name" value="Scorpion_toxinS_K_inh"/>
</dbReference>
<dbReference type="Pfam" id="PF00451">
    <property type="entry name" value="Toxin_2"/>
    <property type="match status" value="1"/>
</dbReference>
<dbReference type="PRINTS" id="PR00286">
    <property type="entry name" value="CHARYBDTOXIN"/>
</dbReference>
<dbReference type="SUPFAM" id="SSF57095">
    <property type="entry name" value="Scorpion toxin-like"/>
    <property type="match status" value="1"/>
</dbReference>
<dbReference type="PROSITE" id="PS01138">
    <property type="entry name" value="SCORP_SHORT_TOXIN"/>
    <property type="match status" value="1"/>
</dbReference>